<feature type="chain" id="PRO_1000073601" description="UPF0397 protein NWMN_2583">
    <location>
        <begin position="1"/>
        <end position="184"/>
    </location>
</feature>
<feature type="transmembrane region" description="Helical" evidence="1">
    <location>
        <begin position="11"/>
        <end position="31"/>
    </location>
</feature>
<feature type="transmembrane region" description="Helical" evidence="1">
    <location>
        <begin position="44"/>
        <end position="64"/>
    </location>
</feature>
<feature type="transmembrane region" description="Helical" evidence="1">
    <location>
        <begin position="77"/>
        <end position="97"/>
    </location>
</feature>
<feature type="transmembrane region" description="Helical" evidence="1">
    <location>
        <begin position="116"/>
        <end position="136"/>
    </location>
</feature>
<feature type="transmembrane region" description="Helical" evidence="1">
    <location>
        <begin position="148"/>
        <end position="168"/>
    </location>
</feature>
<organism>
    <name type="scientific">Staphylococcus aureus (strain Newman)</name>
    <dbReference type="NCBI Taxonomy" id="426430"/>
    <lineage>
        <taxon>Bacteria</taxon>
        <taxon>Bacillati</taxon>
        <taxon>Bacillota</taxon>
        <taxon>Bacilli</taxon>
        <taxon>Bacillales</taxon>
        <taxon>Staphylococcaceae</taxon>
        <taxon>Staphylococcus</taxon>
    </lineage>
</organism>
<dbReference type="EMBL" id="AP009351">
    <property type="protein sequence ID" value="BAF68855.1"/>
    <property type="molecule type" value="Genomic_DNA"/>
</dbReference>
<dbReference type="RefSeq" id="WP_000743717.1">
    <property type="nucleotide sequence ID" value="NZ_JBBIAE010000005.1"/>
</dbReference>
<dbReference type="KEGG" id="sae:NWMN_2583"/>
<dbReference type="HOGENOM" id="CLU_120023_0_0_9"/>
<dbReference type="Proteomes" id="UP000006386">
    <property type="component" value="Chromosome"/>
</dbReference>
<dbReference type="GO" id="GO:0005886">
    <property type="term" value="C:plasma membrane"/>
    <property type="evidence" value="ECO:0007669"/>
    <property type="project" value="UniProtKB-SubCell"/>
</dbReference>
<dbReference type="Gene3D" id="1.10.1760.20">
    <property type="match status" value="1"/>
</dbReference>
<dbReference type="HAMAP" id="MF_01572">
    <property type="entry name" value="UPF0397"/>
    <property type="match status" value="1"/>
</dbReference>
<dbReference type="InterPro" id="IPR009825">
    <property type="entry name" value="ECF_substrate-spec-like"/>
</dbReference>
<dbReference type="InterPro" id="IPR022914">
    <property type="entry name" value="UPF0397"/>
</dbReference>
<dbReference type="NCBIfam" id="NF010182">
    <property type="entry name" value="PRK13661.1"/>
    <property type="match status" value="1"/>
</dbReference>
<dbReference type="PANTHER" id="PTHR37815">
    <property type="entry name" value="UPF0397 PROTEIN BC_2624-RELATED"/>
    <property type="match status" value="1"/>
</dbReference>
<dbReference type="PANTHER" id="PTHR37815:SF3">
    <property type="entry name" value="UPF0397 PROTEIN SPR0429"/>
    <property type="match status" value="1"/>
</dbReference>
<dbReference type="Pfam" id="PF07155">
    <property type="entry name" value="ECF-ribofla_trS"/>
    <property type="match status" value="1"/>
</dbReference>
<accession>A6QKH3</accession>
<comment type="subcellular location">
    <subcellularLocation>
        <location evidence="1">Cell membrane</location>
        <topology evidence="1">Multi-pass membrane protein</topology>
    </subcellularLocation>
</comment>
<comment type="similarity">
    <text evidence="1">Belongs to the UPF0397 family.</text>
</comment>
<protein>
    <recommendedName>
        <fullName evidence="1">UPF0397 protein NWMN_2583</fullName>
    </recommendedName>
</protein>
<reference key="1">
    <citation type="journal article" date="2008" name="J. Bacteriol.">
        <title>Genome sequence of Staphylococcus aureus strain Newman and comparative analysis of staphylococcal genomes: polymorphism and evolution of two major pathogenicity islands.</title>
        <authorList>
            <person name="Baba T."/>
            <person name="Bae T."/>
            <person name="Schneewind O."/>
            <person name="Takeuchi F."/>
            <person name="Hiramatsu K."/>
        </authorList>
    </citation>
    <scope>NUCLEOTIDE SEQUENCE [LARGE SCALE GENOMIC DNA]</scope>
    <source>
        <strain>Newman</strain>
    </source>
</reference>
<keyword id="KW-1003">Cell membrane</keyword>
<keyword id="KW-0472">Membrane</keyword>
<keyword id="KW-0812">Transmembrane</keyword>
<keyword id="KW-1133">Transmembrane helix</keyword>
<sequence>MKKQDISVKTVVAIGIGAAVFVILGRFVVIPTGFPNTNIETSYAFLALISAIFGPFAGLMTGLVGHAIKDFTTYGSAWWSWVICSGIIGCLYGWIGLKLNLSSGRFSRKSMVYFNIGQIIANIICWALIAPTLDILIYNEPANKVYTQGVISAVLNIISVGIIGTILLKAYASSQIKKGSLRKE</sequence>
<proteinExistence type="inferred from homology"/>
<gene>
    <name type="ordered locus">NWMN_2583</name>
</gene>
<evidence type="ECO:0000255" key="1">
    <source>
        <dbReference type="HAMAP-Rule" id="MF_01572"/>
    </source>
</evidence>
<name>Y2583_STAAE</name>